<proteinExistence type="evidence at transcript level"/>
<evidence type="ECO:0000255" key="1"/>
<evidence type="ECO:0000256" key="2">
    <source>
        <dbReference type="SAM" id="MobiDB-lite"/>
    </source>
</evidence>
<evidence type="ECO:0000305" key="3"/>
<sequence>MGFHMGRQLLLSGFLLVMLQMVTQTQARPQDVITVAGEETEVVIKREGDDDGDDDDSSSEETVEDSEESRRRRREVNTDNTPSARAVIPGEQVVPILLEAILPSVDAAGDRFARSVQFLKNLTPGSELFAVEKNE</sequence>
<gene>
    <name type="primary">Os-C</name>
    <name type="ORF">CG3250</name>
</gene>
<accession>Q23971</accession>
<accession>C9QNY5</accession>
<accession>Q9VHX8</accession>
<keyword id="KW-1185">Reference proteome</keyword>
<keyword id="KW-0732">Signal</keyword>
<feature type="signal peptide" evidence="1">
    <location>
        <begin position="1"/>
        <end position="27"/>
    </location>
</feature>
<feature type="chain" id="PRO_0000021952" description="Antennal-specific protein OS-C">
    <location>
        <begin position="28"/>
        <end position="135"/>
    </location>
</feature>
<feature type="region of interest" description="Disordered" evidence="2">
    <location>
        <begin position="43"/>
        <end position="84"/>
    </location>
</feature>
<feature type="compositionally biased region" description="Acidic residues" evidence="2">
    <location>
        <begin position="49"/>
        <end position="67"/>
    </location>
</feature>
<feature type="sequence conflict" description="In Ref. 4; ACX30029." evidence="3" ref="4">
    <original>LLV</original>
    <variation>AEL</variation>
    <location>
        <begin position="15"/>
        <end position="17"/>
    </location>
</feature>
<dbReference type="EMBL" id="AE014297">
    <property type="protein sequence ID" value="AAF54171.3"/>
    <property type="molecule type" value="Genomic_DNA"/>
</dbReference>
<dbReference type="EMBL" id="BT099867">
    <property type="protein sequence ID" value="ACX30029.1"/>
    <property type="status" value="ALT_INIT"/>
    <property type="molecule type" value="mRNA"/>
</dbReference>
<dbReference type="EMBL" id="U02545">
    <property type="protein sequence ID" value="AAA21357.1"/>
    <property type="status" value="ALT_INIT"/>
    <property type="molecule type" value="mRNA"/>
</dbReference>
<dbReference type="RefSeq" id="NP_649753.3">
    <property type="nucleotide sequence ID" value="NM_141496.3"/>
</dbReference>
<dbReference type="SMR" id="Q23971"/>
<dbReference type="BioGRID" id="66127">
    <property type="interactions" value="3"/>
</dbReference>
<dbReference type="DIP" id="DIP-18679N"/>
<dbReference type="IntAct" id="Q23971">
    <property type="interactions" value="2"/>
</dbReference>
<dbReference type="STRING" id="7227.FBpp0289548"/>
<dbReference type="DNASU" id="40942"/>
<dbReference type="EnsemblMetazoa" id="FBtr0300321">
    <property type="protein sequence ID" value="FBpp0289549"/>
    <property type="gene ID" value="FBgn0010401"/>
</dbReference>
<dbReference type="GeneID" id="40942"/>
<dbReference type="KEGG" id="dme:Dmel_CG3250"/>
<dbReference type="UCSC" id="CG3250-RB">
    <property type="organism name" value="d. melanogaster"/>
</dbReference>
<dbReference type="AGR" id="FB:FBgn0010401"/>
<dbReference type="CTD" id="40942"/>
<dbReference type="FlyBase" id="FBgn0010401">
    <property type="gene designation" value="Os-C"/>
</dbReference>
<dbReference type="VEuPathDB" id="VectorBase:FBgn0010401"/>
<dbReference type="InParanoid" id="Q23971"/>
<dbReference type="OrthoDB" id="7960203at2759"/>
<dbReference type="PhylomeDB" id="Q23971"/>
<dbReference type="BioGRID-ORCS" id="40942">
    <property type="hits" value="0 hits in 1 CRISPR screen"/>
</dbReference>
<dbReference type="ChiTaRS" id="Os-C">
    <property type="organism name" value="fly"/>
</dbReference>
<dbReference type="GenomeRNAi" id="40942"/>
<dbReference type="PRO" id="PR:Q23971"/>
<dbReference type="Proteomes" id="UP000000803">
    <property type="component" value="Chromosome 3R"/>
</dbReference>
<dbReference type="Bgee" id="FBgn0010401">
    <property type="expression patterns" value="Expressed in adult olfactory receptor neuron Or13a (Drosophila) in antenna and 54 other cell types or tissues"/>
</dbReference>
<dbReference type="ExpressionAtlas" id="Q23971">
    <property type="expression patterns" value="baseline and differential"/>
</dbReference>
<reference key="1">
    <citation type="journal article" date="2000" name="Science">
        <title>The genome sequence of Drosophila melanogaster.</title>
        <authorList>
            <person name="Adams M.D."/>
            <person name="Celniker S.E."/>
            <person name="Holt R.A."/>
            <person name="Evans C.A."/>
            <person name="Gocayne J.D."/>
            <person name="Amanatides P.G."/>
            <person name="Scherer S.E."/>
            <person name="Li P.W."/>
            <person name="Hoskins R.A."/>
            <person name="Galle R.F."/>
            <person name="George R.A."/>
            <person name="Lewis S.E."/>
            <person name="Richards S."/>
            <person name="Ashburner M."/>
            <person name="Henderson S.N."/>
            <person name="Sutton G.G."/>
            <person name="Wortman J.R."/>
            <person name="Yandell M.D."/>
            <person name="Zhang Q."/>
            <person name="Chen L.X."/>
            <person name="Brandon R.C."/>
            <person name="Rogers Y.-H.C."/>
            <person name="Blazej R.G."/>
            <person name="Champe M."/>
            <person name="Pfeiffer B.D."/>
            <person name="Wan K.H."/>
            <person name="Doyle C."/>
            <person name="Baxter E.G."/>
            <person name="Helt G."/>
            <person name="Nelson C.R."/>
            <person name="Miklos G.L.G."/>
            <person name="Abril J.F."/>
            <person name="Agbayani A."/>
            <person name="An H.-J."/>
            <person name="Andrews-Pfannkoch C."/>
            <person name="Baldwin D."/>
            <person name="Ballew R.M."/>
            <person name="Basu A."/>
            <person name="Baxendale J."/>
            <person name="Bayraktaroglu L."/>
            <person name="Beasley E.M."/>
            <person name="Beeson K.Y."/>
            <person name="Benos P.V."/>
            <person name="Berman B.P."/>
            <person name="Bhandari D."/>
            <person name="Bolshakov S."/>
            <person name="Borkova D."/>
            <person name="Botchan M.R."/>
            <person name="Bouck J."/>
            <person name="Brokstein P."/>
            <person name="Brottier P."/>
            <person name="Burtis K.C."/>
            <person name="Busam D.A."/>
            <person name="Butler H."/>
            <person name="Cadieu E."/>
            <person name="Center A."/>
            <person name="Chandra I."/>
            <person name="Cherry J.M."/>
            <person name="Cawley S."/>
            <person name="Dahlke C."/>
            <person name="Davenport L.B."/>
            <person name="Davies P."/>
            <person name="de Pablos B."/>
            <person name="Delcher A."/>
            <person name="Deng Z."/>
            <person name="Mays A.D."/>
            <person name="Dew I."/>
            <person name="Dietz S.M."/>
            <person name="Dodson K."/>
            <person name="Doup L.E."/>
            <person name="Downes M."/>
            <person name="Dugan-Rocha S."/>
            <person name="Dunkov B.C."/>
            <person name="Dunn P."/>
            <person name="Durbin K.J."/>
            <person name="Evangelista C.C."/>
            <person name="Ferraz C."/>
            <person name="Ferriera S."/>
            <person name="Fleischmann W."/>
            <person name="Fosler C."/>
            <person name="Gabrielian A.E."/>
            <person name="Garg N.S."/>
            <person name="Gelbart W.M."/>
            <person name="Glasser K."/>
            <person name="Glodek A."/>
            <person name="Gong F."/>
            <person name="Gorrell J.H."/>
            <person name="Gu Z."/>
            <person name="Guan P."/>
            <person name="Harris M."/>
            <person name="Harris N.L."/>
            <person name="Harvey D.A."/>
            <person name="Heiman T.J."/>
            <person name="Hernandez J.R."/>
            <person name="Houck J."/>
            <person name="Hostin D."/>
            <person name="Houston K.A."/>
            <person name="Howland T.J."/>
            <person name="Wei M.-H."/>
            <person name="Ibegwam C."/>
            <person name="Jalali M."/>
            <person name="Kalush F."/>
            <person name="Karpen G.H."/>
            <person name="Ke Z."/>
            <person name="Kennison J.A."/>
            <person name="Ketchum K.A."/>
            <person name="Kimmel B.E."/>
            <person name="Kodira C.D."/>
            <person name="Kraft C.L."/>
            <person name="Kravitz S."/>
            <person name="Kulp D."/>
            <person name="Lai Z."/>
            <person name="Lasko P."/>
            <person name="Lei Y."/>
            <person name="Levitsky A.A."/>
            <person name="Li J.H."/>
            <person name="Li Z."/>
            <person name="Liang Y."/>
            <person name="Lin X."/>
            <person name="Liu X."/>
            <person name="Mattei B."/>
            <person name="McIntosh T.C."/>
            <person name="McLeod M.P."/>
            <person name="McPherson D."/>
            <person name="Merkulov G."/>
            <person name="Milshina N.V."/>
            <person name="Mobarry C."/>
            <person name="Morris J."/>
            <person name="Moshrefi A."/>
            <person name="Mount S.M."/>
            <person name="Moy M."/>
            <person name="Murphy B."/>
            <person name="Murphy L."/>
            <person name="Muzny D.M."/>
            <person name="Nelson D.L."/>
            <person name="Nelson D.R."/>
            <person name="Nelson K.A."/>
            <person name="Nixon K."/>
            <person name="Nusskern D.R."/>
            <person name="Pacleb J.M."/>
            <person name="Palazzolo M."/>
            <person name="Pittman G.S."/>
            <person name="Pan S."/>
            <person name="Pollard J."/>
            <person name="Puri V."/>
            <person name="Reese M.G."/>
            <person name="Reinert K."/>
            <person name="Remington K."/>
            <person name="Saunders R.D.C."/>
            <person name="Scheeler F."/>
            <person name="Shen H."/>
            <person name="Shue B.C."/>
            <person name="Siden-Kiamos I."/>
            <person name="Simpson M."/>
            <person name="Skupski M.P."/>
            <person name="Smith T.J."/>
            <person name="Spier E."/>
            <person name="Spradling A.C."/>
            <person name="Stapleton M."/>
            <person name="Strong R."/>
            <person name="Sun E."/>
            <person name="Svirskas R."/>
            <person name="Tector C."/>
            <person name="Turner R."/>
            <person name="Venter E."/>
            <person name="Wang A.H."/>
            <person name="Wang X."/>
            <person name="Wang Z.-Y."/>
            <person name="Wassarman D.A."/>
            <person name="Weinstock G.M."/>
            <person name="Weissenbach J."/>
            <person name="Williams S.M."/>
            <person name="Woodage T."/>
            <person name="Worley K.C."/>
            <person name="Wu D."/>
            <person name="Yang S."/>
            <person name="Yao Q.A."/>
            <person name="Ye J."/>
            <person name="Yeh R.-F."/>
            <person name="Zaveri J.S."/>
            <person name="Zhan M."/>
            <person name="Zhang G."/>
            <person name="Zhao Q."/>
            <person name="Zheng L."/>
            <person name="Zheng X.H."/>
            <person name="Zhong F.N."/>
            <person name="Zhong W."/>
            <person name="Zhou X."/>
            <person name="Zhu S.C."/>
            <person name="Zhu X."/>
            <person name="Smith H.O."/>
            <person name="Gibbs R.A."/>
            <person name="Myers E.W."/>
            <person name="Rubin G.M."/>
            <person name="Venter J.C."/>
        </authorList>
    </citation>
    <scope>NUCLEOTIDE SEQUENCE [LARGE SCALE GENOMIC DNA]</scope>
    <source>
        <strain>Berkeley</strain>
    </source>
</reference>
<reference key="2">
    <citation type="journal article" date="2002" name="Genome Biol.">
        <title>Annotation of the Drosophila melanogaster euchromatic genome: a systematic review.</title>
        <authorList>
            <person name="Misra S."/>
            <person name="Crosby M.A."/>
            <person name="Mungall C.J."/>
            <person name="Matthews B.B."/>
            <person name="Campbell K.S."/>
            <person name="Hradecky P."/>
            <person name="Huang Y."/>
            <person name="Kaminker J.S."/>
            <person name="Millburn G.H."/>
            <person name="Prochnik S.E."/>
            <person name="Smith C.D."/>
            <person name="Tupy J.L."/>
            <person name="Whitfield E.J."/>
            <person name="Bayraktaroglu L."/>
            <person name="Berman B.P."/>
            <person name="Bettencourt B.R."/>
            <person name="Celniker S.E."/>
            <person name="de Grey A.D.N.J."/>
            <person name="Drysdale R.A."/>
            <person name="Harris N.L."/>
            <person name="Richter J."/>
            <person name="Russo S."/>
            <person name="Schroeder A.J."/>
            <person name="Shu S.Q."/>
            <person name="Stapleton M."/>
            <person name="Yamada C."/>
            <person name="Ashburner M."/>
            <person name="Gelbart W.M."/>
            <person name="Rubin G.M."/>
            <person name="Lewis S.E."/>
        </authorList>
    </citation>
    <scope>GENOME REANNOTATION</scope>
    <source>
        <strain>Berkeley</strain>
    </source>
</reference>
<reference key="3">
    <citation type="submission" date="2009-09" db="EMBL/GenBank/DDBJ databases">
        <authorList>
            <person name="Carlson J."/>
            <person name="Booth B."/>
            <person name="Frise E."/>
            <person name="Sandler J."/>
            <person name="Wan K."/>
            <person name="Yu C."/>
            <person name="Celniker S."/>
        </authorList>
    </citation>
    <scope>NUCLEOTIDE SEQUENCE [LARGE SCALE MRNA]</scope>
</reference>
<reference key="4">
    <citation type="journal article" date="1994" name="J. Biol. Chem.">
        <title>Putative Drosophila pheromone-binding proteins expressed in a subregion of the olfactory system.</title>
        <authorList>
            <person name="McKenna M.P."/>
            <person name="Hekmat-Scafe D.S."/>
            <person name="Gaines P."/>
            <person name="Carlson J.R."/>
        </authorList>
    </citation>
    <scope>NUCLEOTIDE SEQUENCE [MRNA] OF 15-135</scope>
    <source>
        <strain>CS-5</strain>
        <tissue>Antenna</tissue>
    </source>
</reference>
<name>OSC_DROME</name>
<protein>
    <recommendedName>
        <fullName>Antennal-specific protein OS-C</fullName>
    </recommendedName>
</protein>
<organism>
    <name type="scientific">Drosophila melanogaster</name>
    <name type="common">Fruit fly</name>
    <dbReference type="NCBI Taxonomy" id="7227"/>
    <lineage>
        <taxon>Eukaryota</taxon>
        <taxon>Metazoa</taxon>
        <taxon>Ecdysozoa</taxon>
        <taxon>Arthropoda</taxon>
        <taxon>Hexapoda</taxon>
        <taxon>Insecta</taxon>
        <taxon>Pterygota</taxon>
        <taxon>Neoptera</taxon>
        <taxon>Endopterygota</taxon>
        <taxon>Diptera</taxon>
        <taxon>Brachycera</taxon>
        <taxon>Muscomorpha</taxon>
        <taxon>Ephydroidea</taxon>
        <taxon>Drosophilidae</taxon>
        <taxon>Drosophila</taxon>
        <taxon>Sophophora</taxon>
    </lineage>
</organism>
<comment type="tissue specificity">
    <text>Antenna. In the third antennal segment. Expressed in sencilla coeloconica.</text>
</comment>
<comment type="developmental stage">
    <text>Expressed in adult but not in larval olfactory organs.</text>
</comment>
<comment type="sequence caution" evidence="3">
    <conflict type="erroneous initiation">
        <sequence resource="EMBL-CDS" id="AAA21357"/>
    </conflict>
    <text>Truncated N-terminus.</text>
</comment>
<comment type="sequence caution" evidence="3">
    <conflict type="erroneous initiation">
        <sequence resource="EMBL-CDS" id="ACX30029"/>
    </conflict>
    <text>Extended N-terminus.</text>
</comment>